<dbReference type="EC" id="2.5.1.19" evidence="1"/>
<dbReference type="EMBL" id="CP001050">
    <property type="protein sequence ID" value="ACF29582.1"/>
    <property type="molecule type" value="Genomic_DNA"/>
</dbReference>
<dbReference type="RefSeq" id="WP_012503577.1">
    <property type="nucleotide sequence ID" value="NC_011035.1"/>
</dbReference>
<dbReference type="SMR" id="B4RL93"/>
<dbReference type="KEGG" id="ngk:NGK_0903"/>
<dbReference type="HOGENOM" id="CLU_024321_0_0_4"/>
<dbReference type="UniPathway" id="UPA00053">
    <property type="reaction ID" value="UER00089"/>
</dbReference>
<dbReference type="Proteomes" id="UP000002564">
    <property type="component" value="Chromosome"/>
</dbReference>
<dbReference type="GO" id="GO:0005737">
    <property type="term" value="C:cytoplasm"/>
    <property type="evidence" value="ECO:0007669"/>
    <property type="project" value="UniProtKB-SubCell"/>
</dbReference>
<dbReference type="GO" id="GO:0003866">
    <property type="term" value="F:3-phosphoshikimate 1-carboxyvinyltransferase activity"/>
    <property type="evidence" value="ECO:0007669"/>
    <property type="project" value="UniProtKB-UniRule"/>
</dbReference>
<dbReference type="GO" id="GO:0008652">
    <property type="term" value="P:amino acid biosynthetic process"/>
    <property type="evidence" value="ECO:0007669"/>
    <property type="project" value="UniProtKB-KW"/>
</dbReference>
<dbReference type="GO" id="GO:0009073">
    <property type="term" value="P:aromatic amino acid family biosynthetic process"/>
    <property type="evidence" value="ECO:0007669"/>
    <property type="project" value="UniProtKB-KW"/>
</dbReference>
<dbReference type="GO" id="GO:0009423">
    <property type="term" value="P:chorismate biosynthetic process"/>
    <property type="evidence" value="ECO:0007669"/>
    <property type="project" value="UniProtKB-UniRule"/>
</dbReference>
<dbReference type="CDD" id="cd01556">
    <property type="entry name" value="EPSP_synthase"/>
    <property type="match status" value="1"/>
</dbReference>
<dbReference type="FunFam" id="3.65.10.10:FF:000003">
    <property type="entry name" value="3-phosphoshikimate 1-carboxyvinyltransferase"/>
    <property type="match status" value="1"/>
</dbReference>
<dbReference type="FunFam" id="3.65.10.10:FF:000005">
    <property type="entry name" value="3-phosphoshikimate 1-carboxyvinyltransferase"/>
    <property type="match status" value="1"/>
</dbReference>
<dbReference type="Gene3D" id="3.65.10.10">
    <property type="entry name" value="Enolpyruvate transferase domain"/>
    <property type="match status" value="2"/>
</dbReference>
<dbReference type="HAMAP" id="MF_00210">
    <property type="entry name" value="EPSP_synth"/>
    <property type="match status" value="1"/>
</dbReference>
<dbReference type="InterPro" id="IPR001986">
    <property type="entry name" value="Enolpyruvate_Tfrase_dom"/>
</dbReference>
<dbReference type="InterPro" id="IPR036968">
    <property type="entry name" value="Enolpyruvate_Tfrase_sf"/>
</dbReference>
<dbReference type="InterPro" id="IPR006264">
    <property type="entry name" value="EPSP_synthase"/>
</dbReference>
<dbReference type="InterPro" id="IPR023193">
    <property type="entry name" value="EPSP_synthase_CS"/>
</dbReference>
<dbReference type="InterPro" id="IPR013792">
    <property type="entry name" value="RNA3'P_cycl/enolpyr_Trfase_a/b"/>
</dbReference>
<dbReference type="NCBIfam" id="TIGR01356">
    <property type="entry name" value="aroA"/>
    <property type="match status" value="1"/>
</dbReference>
<dbReference type="PANTHER" id="PTHR21090">
    <property type="entry name" value="AROM/DEHYDROQUINATE SYNTHASE"/>
    <property type="match status" value="1"/>
</dbReference>
<dbReference type="PANTHER" id="PTHR21090:SF5">
    <property type="entry name" value="PENTAFUNCTIONAL AROM POLYPEPTIDE"/>
    <property type="match status" value="1"/>
</dbReference>
<dbReference type="Pfam" id="PF00275">
    <property type="entry name" value="EPSP_synthase"/>
    <property type="match status" value="1"/>
</dbReference>
<dbReference type="PIRSF" id="PIRSF000505">
    <property type="entry name" value="EPSPS"/>
    <property type="match status" value="1"/>
</dbReference>
<dbReference type="SUPFAM" id="SSF55205">
    <property type="entry name" value="EPT/RTPC-like"/>
    <property type="match status" value="1"/>
</dbReference>
<dbReference type="PROSITE" id="PS00104">
    <property type="entry name" value="EPSP_SYNTHASE_1"/>
    <property type="match status" value="1"/>
</dbReference>
<dbReference type="PROSITE" id="PS00885">
    <property type="entry name" value="EPSP_SYNTHASE_2"/>
    <property type="match status" value="1"/>
</dbReference>
<proteinExistence type="inferred from homology"/>
<name>AROA_NEIG2</name>
<accession>B4RL93</accession>
<feature type="chain" id="PRO_1000099731" description="3-phosphoshikimate 1-carboxyvinyltransferase">
    <location>
        <begin position="1"/>
        <end position="433"/>
    </location>
</feature>
<feature type="active site" description="Proton acceptor" evidence="1">
    <location>
        <position position="317"/>
    </location>
</feature>
<feature type="binding site" evidence="1">
    <location>
        <position position="23"/>
    </location>
    <ligand>
        <name>3-phosphoshikimate</name>
        <dbReference type="ChEBI" id="CHEBI:145989"/>
    </ligand>
</feature>
<feature type="binding site" evidence="1">
    <location>
        <position position="23"/>
    </location>
    <ligand>
        <name>phosphoenolpyruvate</name>
        <dbReference type="ChEBI" id="CHEBI:58702"/>
    </ligand>
</feature>
<feature type="binding site" evidence="1">
    <location>
        <position position="24"/>
    </location>
    <ligand>
        <name>3-phosphoshikimate</name>
        <dbReference type="ChEBI" id="CHEBI:145989"/>
    </ligand>
</feature>
<feature type="binding site" evidence="1">
    <location>
        <position position="28"/>
    </location>
    <ligand>
        <name>3-phosphoshikimate</name>
        <dbReference type="ChEBI" id="CHEBI:145989"/>
    </ligand>
</feature>
<feature type="binding site" evidence="1">
    <location>
        <position position="95"/>
    </location>
    <ligand>
        <name>phosphoenolpyruvate</name>
        <dbReference type="ChEBI" id="CHEBI:58702"/>
    </ligand>
</feature>
<feature type="binding site" evidence="1">
    <location>
        <position position="123"/>
    </location>
    <ligand>
        <name>phosphoenolpyruvate</name>
        <dbReference type="ChEBI" id="CHEBI:58702"/>
    </ligand>
</feature>
<feature type="binding site" evidence="1">
    <location>
        <position position="170"/>
    </location>
    <ligand>
        <name>3-phosphoshikimate</name>
        <dbReference type="ChEBI" id="CHEBI:145989"/>
    </ligand>
</feature>
<feature type="binding site" evidence="1">
    <location>
        <position position="171"/>
    </location>
    <ligand>
        <name>3-phosphoshikimate</name>
        <dbReference type="ChEBI" id="CHEBI:145989"/>
    </ligand>
</feature>
<feature type="binding site" evidence="1">
    <location>
        <position position="172"/>
    </location>
    <ligand>
        <name>3-phosphoshikimate</name>
        <dbReference type="ChEBI" id="CHEBI:145989"/>
    </ligand>
</feature>
<feature type="binding site" evidence="1">
    <location>
        <position position="172"/>
    </location>
    <ligand>
        <name>phosphoenolpyruvate</name>
        <dbReference type="ChEBI" id="CHEBI:58702"/>
    </ligand>
</feature>
<feature type="binding site" evidence="1">
    <location>
        <position position="198"/>
    </location>
    <ligand>
        <name>3-phosphoshikimate</name>
        <dbReference type="ChEBI" id="CHEBI:145989"/>
    </ligand>
</feature>
<feature type="binding site" evidence="1">
    <location>
        <position position="317"/>
    </location>
    <ligand>
        <name>3-phosphoshikimate</name>
        <dbReference type="ChEBI" id="CHEBI:145989"/>
    </ligand>
</feature>
<feature type="binding site" evidence="1">
    <location>
        <position position="344"/>
    </location>
    <ligand>
        <name>3-phosphoshikimate</name>
        <dbReference type="ChEBI" id="CHEBI:145989"/>
    </ligand>
</feature>
<feature type="binding site" evidence="1">
    <location>
        <position position="348"/>
    </location>
    <ligand>
        <name>phosphoenolpyruvate</name>
        <dbReference type="ChEBI" id="CHEBI:58702"/>
    </ligand>
</feature>
<feature type="binding site" evidence="1">
    <location>
        <position position="391"/>
    </location>
    <ligand>
        <name>phosphoenolpyruvate</name>
        <dbReference type="ChEBI" id="CHEBI:58702"/>
    </ligand>
</feature>
<feature type="binding site" evidence="1">
    <location>
        <position position="416"/>
    </location>
    <ligand>
        <name>phosphoenolpyruvate</name>
        <dbReference type="ChEBI" id="CHEBI:58702"/>
    </ligand>
</feature>
<keyword id="KW-0028">Amino-acid biosynthesis</keyword>
<keyword id="KW-0057">Aromatic amino acid biosynthesis</keyword>
<keyword id="KW-0963">Cytoplasm</keyword>
<keyword id="KW-0808">Transferase</keyword>
<organism>
    <name type="scientific">Neisseria gonorrhoeae (strain NCCP11945)</name>
    <dbReference type="NCBI Taxonomy" id="521006"/>
    <lineage>
        <taxon>Bacteria</taxon>
        <taxon>Pseudomonadati</taxon>
        <taxon>Pseudomonadota</taxon>
        <taxon>Betaproteobacteria</taxon>
        <taxon>Neisseriales</taxon>
        <taxon>Neisseriaceae</taxon>
        <taxon>Neisseria</taxon>
    </lineage>
</organism>
<evidence type="ECO:0000255" key="1">
    <source>
        <dbReference type="HAMAP-Rule" id="MF_00210"/>
    </source>
</evidence>
<gene>
    <name evidence="1" type="primary">aroA</name>
    <name type="ordered locus">NGK_0903</name>
</gene>
<reference key="1">
    <citation type="journal article" date="2008" name="J. Bacteriol.">
        <title>Complete genome sequence of Neisseria gonorrhoeae NCCP11945.</title>
        <authorList>
            <person name="Chung G.T."/>
            <person name="Yoo J.S."/>
            <person name="Oh H.B."/>
            <person name="Lee Y.S."/>
            <person name="Cha S.H."/>
            <person name="Kim S.J."/>
            <person name="Yoo C.K."/>
        </authorList>
    </citation>
    <scope>NUCLEOTIDE SEQUENCE [LARGE SCALE GENOMIC DNA]</scope>
    <source>
        <strain>NCCP11945</strain>
    </source>
</reference>
<protein>
    <recommendedName>
        <fullName evidence="1">3-phosphoshikimate 1-carboxyvinyltransferase</fullName>
        <ecNumber evidence="1">2.5.1.19</ecNumber>
    </recommendedName>
    <alternativeName>
        <fullName evidence="1">5-enolpyruvylshikimate-3-phosphate synthase</fullName>
        <shortName evidence="1">EPSP synthase</shortName>
        <shortName evidence="1">EPSPS</shortName>
    </alternativeName>
</protein>
<comment type="function">
    <text evidence="1">Catalyzes the transfer of the enolpyruvyl moiety of phosphoenolpyruvate (PEP) to the 5-hydroxyl of shikimate-3-phosphate (S3P) to produce enolpyruvyl shikimate-3-phosphate and inorganic phosphate.</text>
</comment>
<comment type="catalytic activity">
    <reaction evidence="1">
        <text>3-phosphoshikimate + phosphoenolpyruvate = 5-O-(1-carboxyvinyl)-3-phosphoshikimate + phosphate</text>
        <dbReference type="Rhea" id="RHEA:21256"/>
        <dbReference type="ChEBI" id="CHEBI:43474"/>
        <dbReference type="ChEBI" id="CHEBI:57701"/>
        <dbReference type="ChEBI" id="CHEBI:58702"/>
        <dbReference type="ChEBI" id="CHEBI:145989"/>
        <dbReference type="EC" id="2.5.1.19"/>
    </reaction>
    <physiologicalReaction direction="left-to-right" evidence="1">
        <dbReference type="Rhea" id="RHEA:21257"/>
    </physiologicalReaction>
</comment>
<comment type="pathway">
    <text evidence="1">Metabolic intermediate biosynthesis; chorismate biosynthesis; chorismate from D-erythrose 4-phosphate and phosphoenolpyruvate: step 6/7.</text>
</comment>
<comment type="subunit">
    <text evidence="1">Monomer.</text>
</comment>
<comment type="subcellular location">
    <subcellularLocation>
        <location evidence="1">Cytoplasm</location>
    </subcellularLocation>
</comment>
<comment type="similarity">
    <text evidence="1">Belongs to the EPSP synthase family.</text>
</comment>
<sequence length="433" mass="46760">MTESVRLPAASLKPSTVALPGSKSISNRTLLLAALSDNVCEIHSLLKSDDTDRMLEALDKLGVQIEHLAEGRLKVHGTGGRFPNRSADLFLGNAGTAFRPLTAALAVLGGGYHLHGVPRMHERPIGDLVDALRIAGADVEYLGNEHYPPLHIGKRQDCGERVIPIKGNVSSQFLTALLMALPLTGQAFEIRMVGELISKPYIDITLKLMAQFGVQVANEGYRVFKIPADAHYHAPEHLHVEGDASGASYFLAAGLIAATPVRVTGIGANSIQGDVAFARELEKIGADVVWGENFVEVSRPKGRAVQAFDLDANHIPDAAMTLAIVALATRQTCTLRNIGSWRVKETDRIAAMANELRKLGAKVVEEAEAIHITPPETPTPDAVIDTYDDHRMAMCFSLISLLGVPVVINDPKCTHKTFPTYFEVFSSLTETAE</sequence>